<evidence type="ECO:0000255" key="1">
    <source>
        <dbReference type="HAMAP-Rule" id="MF_00069"/>
    </source>
</evidence>
<protein>
    <recommendedName>
        <fullName evidence="1">Hydroxylamine reductase</fullName>
        <ecNumber evidence="1">1.7.99.1</ecNumber>
    </recommendedName>
    <alternativeName>
        <fullName evidence="1">Hybrid-cluster protein</fullName>
        <shortName evidence="1">HCP</shortName>
    </alternativeName>
    <alternativeName>
        <fullName evidence="1">Prismane protein</fullName>
    </alternativeName>
</protein>
<comment type="function">
    <text evidence="1">Catalyzes the reduction of hydroxylamine to form NH(3) and H(2)O.</text>
</comment>
<comment type="catalytic activity">
    <reaction evidence="1">
        <text>A + NH4(+) + H2O = hydroxylamine + AH2 + H(+)</text>
        <dbReference type="Rhea" id="RHEA:22052"/>
        <dbReference type="ChEBI" id="CHEBI:13193"/>
        <dbReference type="ChEBI" id="CHEBI:15377"/>
        <dbReference type="ChEBI" id="CHEBI:15378"/>
        <dbReference type="ChEBI" id="CHEBI:15429"/>
        <dbReference type="ChEBI" id="CHEBI:17499"/>
        <dbReference type="ChEBI" id="CHEBI:28938"/>
        <dbReference type="EC" id="1.7.99.1"/>
    </reaction>
</comment>
<comment type="cofactor">
    <cofactor evidence="1">
        <name>[2Fe-2S] cluster</name>
        <dbReference type="ChEBI" id="CHEBI:190135"/>
    </cofactor>
    <text evidence="1">Binds 1 [2Fe-2S] cluster.</text>
</comment>
<comment type="cofactor">
    <cofactor evidence="1">
        <name>hybrid [4Fe-2O-2S] cluster</name>
        <dbReference type="ChEBI" id="CHEBI:60519"/>
    </cofactor>
    <text evidence="1">Binds 1 hybrid [4Fe-2O-2S] cluster.</text>
</comment>
<comment type="subcellular location">
    <subcellularLocation>
        <location evidence="1">Cytoplasm</location>
    </subcellularLocation>
</comment>
<comment type="similarity">
    <text evidence="1">Belongs to the HCP family.</text>
</comment>
<feature type="chain" id="PRO_1000057464" description="Hydroxylamine reductase">
    <location>
        <begin position="1"/>
        <end position="550"/>
    </location>
</feature>
<feature type="binding site" evidence="1">
    <location>
        <position position="3"/>
    </location>
    <ligand>
        <name>[2Fe-2S] cluster</name>
        <dbReference type="ChEBI" id="CHEBI:190135"/>
    </ligand>
</feature>
<feature type="binding site" evidence="1">
    <location>
        <position position="6"/>
    </location>
    <ligand>
        <name>[2Fe-2S] cluster</name>
        <dbReference type="ChEBI" id="CHEBI:190135"/>
    </ligand>
</feature>
<feature type="binding site" evidence="1">
    <location>
        <position position="18"/>
    </location>
    <ligand>
        <name>[2Fe-2S] cluster</name>
        <dbReference type="ChEBI" id="CHEBI:190135"/>
    </ligand>
</feature>
<feature type="binding site" evidence="1">
    <location>
        <position position="25"/>
    </location>
    <ligand>
        <name>[2Fe-2S] cluster</name>
        <dbReference type="ChEBI" id="CHEBI:190135"/>
    </ligand>
</feature>
<feature type="binding site" evidence="1">
    <location>
        <position position="249"/>
    </location>
    <ligand>
        <name>hybrid [4Fe-2O-2S] cluster</name>
        <dbReference type="ChEBI" id="CHEBI:60519"/>
    </ligand>
</feature>
<feature type="binding site" evidence="1">
    <location>
        <position position="273"/>
    </location>
    <ligand>
        <name>hybrid [4Fe-2O-2S] cluster</name>
        <dbReference type="ChEBI" id="CHEBI:60519"/>
    </ligand>
</feature>
<feature type="binding site" evidence="1">
    <location>
        <position position="317"/>
    </location>
    <ligand>
        <name>hybrid [4Fe-2O-2S] cluster</name>
        <dbReference type="ChEBI" id="CHEBI:60519"/>
    </ligand>
</feature>
<feature type="binding site" description="via persulfide group" evidence="1">
    <location>
        <position position="405"/>
    </location>
    <ligand>
        <name>hybrid [4Fe-2O-2S] cluster</name>
        <dbReference type="ChEBI" id="CHEBI:60519"/>
    </ligand>
</feature>
<feature type="binding site" evidence="1">
    <location>
        <position position="433"/>
    </location>
    <ligand>
        <name>hybrid [4Fe-2O-2S] cluster</name>
        <dbReference type="ChEBI" id="CHEBI:60519"/>
    </ligand>
</feature>
<feature type="binding site" evidence="1">
    <location>
        <position position="458"/>
    </location>
    <ligand>
        <name>hybrid [4Fe-2O-2S] cluster</name>
        <dbReference type="ChEBI" id="CHEBI:60519"/>
    </ligand>
</feature>
<feature type="binding site" evidence="1">
    <location>
        <position position="492"/>
    </location>
    <ligand>
        <name>hybrid [4Fe-2O-2S] cluster</name>
        <dbReference type="ChEBI" id="CHEBI:60519"/>
    </ligand>
</feature>
<feature type="binding site" evidence="1">
    <location>
        <position position="494"/>
    </location>
    <ligand>
        <name>hybrid [4Fe-2O-2S] cluster</name>
        <dbReference type="ChEBI" id="CHEBI:60519"/>
    </ligand>
</feature>
<feature type="modified residue" description="Cysteine persulfide" evidence="1">
    <location>
        <position position="405"/>
    </location>
</feature>
<organism>
    <name type="scientific">Yersinia pseudotuberculosis serotype O:1b (strain IP 31758)</name>
    <dbReference type="NCBI Taxonomy" id="349747"/>
    <lineage>
        <taxon>Bacteria</taxon>
        <taxon>Pseudomonadati</taxon>
        <taxon>Pseudomonadota</taxon>
        <taxon>Gammaproteobacteria</taxon>
        <taxon>Enterobacterales</taxon>
        <taxon>Yersiniaceae</taxon>
        <taxon>Yersinia</taxon>
    </lineage>
</organism>
<keyword id="KW-0001">2Fe-2S</keyword>
<keyword id="KW-0963">Cytoplasm</keyword>
<keyword id="KW-0408">Iron</keyword>
<keyword id="KW-0411">Iron-sulfur</keyword>
<keyword id="KW-0479">Metal-binding</keyword>
<keyword id="KW-0560">Oxidoreductase</keyword>
<gene>
    <name evidence="1" type="primary">hcp</name>
    <name type="ordered locus">YpsIP31758_2617</name>
</gene>
<reference key="1">
    <citation type="journal article" date="2007" name="PLoS Genet.">
        <title>The complete genome sequence of Yersinia pseudotuberculosis IP31758, the causative agent of Far East scarlet-like fever.</title>
        <authorList>
            <person name="Eppinger M."/>
            <person name="Rosovitz M.J."/>
            <person name="Fricke W.F."/>
            <person name="Rasko D.A."/>
            <person name="Kokorina G."/>
            <person name="Fayolle C."/>
            <person name="Lindler L.E."/>
            <person name="Carniel E."/>
            <person name="Ravel J."/>
        </authorList>
    </citation>
    <scope>NUCLEOTIDE SEQUENCE [LARGE SCALE GENOMIC DNA]</scope>
    <source>
        <strain>IP 31758</strain>
    </source>
</reference>
<accession>A7FK04</accession>
<sequence>MFCVQCEQTIRTPAGNGCSYAQGMCGKTAETSDLQDLLVAVLQGLSAWALQARELGIIDSQIDSFAPRAFFSTLTNVNFDSDRIVEYAKDAILLRHSLAVRCRLLDSTITVDHPLAELQLVADDIPSLLQQSQQFALNNDKADVGDDIHGLRMLCLYGLKGAAAYMEHAHVLGQSDEQIYAEYHAYMAWLGTQPRDVDTLLNNAMGIGKMNFNVMAILDQGETQAYGDPQPTSVNVRPVAGKAILISGHDLKDLHMLLEQTQGTGINIYTHGEMLPAHGYPELKRYPHLVGNYGSGWQNQQTEFAKFPGPILMTSNCIIDPNVGNYGDRIWTRSIVGWPGVNHLDGDNFAPVIEQALGMAGFPYSELEHLITVGFGRQTLLNAADTVIDLVASKKLRHVFLVGGCDGSRTERSYFTDFARSVPQDCIIMTLACGKYRFNKLDFGTLEGLPRLLDVGQCNDAYAAIMLAVKLSEKLGCTVNDLPLSLVLSWFEQKAIVILLTLLSLGVKNIYTGPTAPGFLTDNLMAILYEKFGMQPITTVEQDMQAILGH</sequence>
<dbReference type="EC" id="1.7.99.1" evidence="1"/>
<dbReference type="EMBL" id="CP000720">
    <property type="protein sequence ID" value="ABS46203.1"/>
    <property type="molecule type" value="Genomic_DNA"/>
</dbReference>
<dbReference type="RefSeq" id="WP_002211359.1">
    <property type="nucleotide sequence ID" value="NC_009708.1"/>
</dbReference>
<dbReference type="SMR" id="A7FK04"/>
<dbReference type="GeneID" id="57977156"/>
<dbReference type="KEGG" id="ypi:YpsIP31758_2617"/>
<dbReference type="HOGENOM" id="CLU_038344_2_0_6"/>
<dbReference type="Proteomes" id="UP000002412">
    <property type="component" value="Chromosome"/>
</dbReference>
<dbReference type="GO" id="GO:0005737">
    <property type="term" value="C:cytoplasm"/>
    <property type="evidence" value="ECO:0007669"/>
    <property type="project" value="UniProtKB-SubCell"/>
</dbReference>
<dbReference type="GO" id="GO:0051537">
    <property type="term" value="F:2 iron, 2 sulfur cluster binding"/>
    <property type="evidence" value="ECO:0007669"/>
    <property type="project" value="UniProtKB-KW"/>
</dbReference>
<dbReference type="GO" id="GO:0050418">
    <property type="term" value="F:hydroxylamine reductase activity"/>
    <property type="evidence" value="ECO:0007669"/>
    <property type="project" value="UniProtKB-UniRule"/>
</dbReference>
<dbReference type="GO" id="GO:0046872">
    <property type="term" value="F:metal ion binding"/>
    <property type="evidence" value="ECO:0007669"/>
    <property type="project" value="UniProtKB-KW"/>
</dbReference>
<dbReference type="GO" id="GO:0004601">
    <property type="term" value="F:peroxidase activity"/>
    <property type="evidence" value="ECO:0007669"/>
    <property type="project" value="TreeGrafter"/>
</dbReference>
<dbReference type="GO" id="GO:0042542">
    <property type="term" value="P:response to hydrogen peroxide"/>
    <property type="evidence" value="ECO:0007669"/>
    <property type="project" value="TreeGrafter"/>
</dbReference>
<dbReference type="CDD" id="cd01914">
    <property type="entry name" value="HCP"/>
    <property type="match status" value="1"/>
</dbReference>
<dbReference type="FunFam" id="1.20.1270.20:FF:000001">
    <property type="entry name" value="Hydroxylamine reductase"/>
    <property type="match status" value="1"/>
</dbReference>
<dbReference type="FunFam" id="1.20.1270.20:FF:000002">
    <property type="entry name" value="Hydroxylamine reductase"/>
    <property type="match status" value="1"/>
</dbReference>
<dbReference type="FunFam" id="3.40.50.2030:FF:000001">
    <property type="entry name" value="Hydroxylamine reductase"/>
    <property type="match status" value="1"/>
</dbReference>
<dbReference type="FunFam" id="3.40.50.2030:FF:000002">
    <property type="entry name" value="Hydroxylamine reductase"/>
    <property type="match status" value="1"/>
</dbReference>
<dbReference type="Gene3D" id="1.20.1270.20">
    <property type="match status" value="2"/>
</dbReference>
<dbReference type="Gene3D" id="3.40.50.2030">
    <property type="match status" value="2"/>
</dbReference>
<dbReference type="HAMAP" id="MF_00069">
    <property type="entry name" value="Hydroxylam_reduct"/>
    <property type="match status" value="1"/>
</dbReference>
<dbReference type="InterPro" id="IPR004137">
    <property type="entry name" value="HCP/CODH"/>
</dbReference>
<dbReference type="InterPro" id="IPR010048">
    <property type="entry name" value="Hydroxylam_reduct"/>
</dbReference>
<dbReference type="InterPro" id="IPR016099">
    <property type="entry name" value="Prismane-like_a/b-sand"/>
</dbReference>
<dbReference type="InterPro" id="IPR011254">
    <property type="entry name" value="Prismane-like_sf"/>
</dbReference>
<dbReference type="InterPro" id="IPR016100">
    <property type="entry name" value="Prismane_a-bundle"/>
</dbReference>
<dbReference type="NCBIfam" id="TIGR01703">
    <property type="entry name" value="hybrid_clust"/>
    <property type="match status" value="1"/>
</dbReference>
<dbReference type="NCBIfam" id="NF003658">
    <property type="entry name" value="PRK05290.1"/>
    <property type="match status" value="1"/>
</dbReference>
<dbReference type="PANTHER" id="PTHR30109">
    <property type="entry name" value="HYDROXYLAMINE REDUCTASE"/>
    <property type="match status" value="1"/>
</dbReference>
<dbReference type="PANTHER" id="PTHR30109:SF0">
    <property type="entry name" value="HYDROXYLAMINE REDUCTASE"/>
    <property type="match status" value="1"/>
</dbReference>
<dbReference type="Pfam" id="PF03063">
    <property type="entry name" value="Prismane"/>
    <property type="match status" value="1"/>
</dbReference>
<dbReference type="PIRSF" id="PIRSF000076">
    <property type="entry name" value="HCP"/>
    <property type="match status" value="1"/>
</dbReference>
<dbReference type="SUPFAM" id="SSF56821">
    <property type="entry name" value="Prismane protein-like"/>
    <property type="match status" value="1"/>
</dbReference>
<name>HCP_YERP3</name>
<proteinExistence type="inferred from homology"/>